<proteinExistence type="inferred from homology"/>
<protein>
    <recommendedName>
        <fullName evidence="1">Biotin synthase</fullName>
        <ecNumber evidence="1">2.8.1.6</ecNumber>
    </recommendedName>
</protein>
<gene>
    <name evidence="1" type="primary">bioB</name>
    <name type="ordered locus">slr1364</name>
</gene>
<evidence type="ECO:0000255" key="1">
    <source>
        <dbReference type="HAMAP-Rule" id="MF_01694"/>
    </source>
</evidence>
<evidence type="ECO:0000255" key="2">
    <source>
        <dbReference type="PROSITE-ProRule" id="PRU01266"/>
    </source>
</evidence>
<name>BIOB_SYNY3</name>
<reference key="1">
    <citation type="journal article" date="1996" name="DNA Res.">
        <title>Sequence analysis of the genome of the unicellular cyanobacterium Synechocystis sp. strain PCC6803. II. Sequence determination of the entire genome and assignment of potential protein-coding regions.</title>
        <authorList>
            <person name="Kaneko T."/>
            <person name="Sato S."/>
            <person name="Kotani H."/>
            <person name="Tanaka A."/>
            <person name="Asamizu E."/>
            <person name="Nakamura Y."/>
            <person name="Miyajima N."/>
            <person name="Hirosawa M."/>
            <person name="Sugiura M."/>
            <person name="Sasamoto S."/>
            <person name="Kimura T."/>
            <person name="Hosouchi T."/>
            <person name="Matsuno A."/>
            <person name="Muraki A."/>
            <person name="Nakazaki N."/>
            <person name="Naruo K."/>
            <person name="Okumura S."/>
            <person name="Shimpo S."/>
            <person name="Takeuchi C."/>
            <person name="Wada T."/>
            <person name="Watanabe A."/>
            <person name="Yamada M."/>
            <person name="Yasuda M."/>
            <person name="Tabata S."/>
        </authorList>
    </citation>
    <scope>NUCLEOTIDE SEQUENCE [LARGE SCALE GENOMIC DNA]</scope>
    <source>
        <strain>ATCC 27184 / PCC 6803 / Kazusa</strain>
    </source>
</reference>
<sequence length="362" mass="39350">MVLASSRPPSPTNSPADRQGTLQAWLTGLSQRIIDGDRLTREEALQLAAIEGEENILLLCEAANRIREACCGNVVDLCSIINVKSGNCSENCGFCSQSSHHPDPNSPIYGLKTEAEILEQARAAAAAGAKRFCLVSQGRGPKYHSPKDREFEQILATVRQIIQETNIKPCCALGEVTPEQAQQLKEAGVTRYNHNLEASATYYDKIVSTHTWQDRVDTVKNLKAAGIQACTGGILGMGETWEDRIDLALALRELEVESVPLNLLNPRPGTPLGEQQKLNPYDALKAIAIFRFILPQQIIRYAGGREAVMGELQDLGLKAGINAMLVGHYLTTLGQPPERDQKLLASLGLEGGEAPIPGEYQS</sequence>
<dbReference type="EC" id="2.8.1.6" evidence="1"/>
<dbReference type="EMBL" id="BA000022">
    <property type="protein sequence ID" value="BAA17578.1"/>
    <property type="molecule type" value="Genomic_DNA"/>
</dbReference>
<dbReference type="PIR" id="S77244">
    <property type="entry name" value="S77244"/>
</dbReference>
<dbReference type="SMR" id="P73538"/>
<dbReference type="FunCoup" id="P73538">
    <property type="interactions" value="353"/>
</dbReference>
<dbReference type="IntAct" id="P73538">
    <property type="interactions" value="4"/>
</dbReference>
<dbReference type="STRING" id="1148.gene:10498445"/>
<dbReference type="PaxDb" id="1148-1652658"/>
<dbReference type="EnsemblBacteria" id="BAA17578">
    <property type="protein sequence ID" value="BAA17578"/>
    <property type="gene ID" value="BAA17578"/>
</dbReference>
<dbReference type="KEGG" id="syn:slr1364"/>
<dbReference type="eggNOG" id="COG0502">
    <property type="taxonomic scope" value="Bacteria"/>
</dbReference>
<dbReference type="InParanoid" id="P73538"/>
<dbReference type="PhylomeDB" id="P73538"/>
<dbReference type="BioCyc" id="MetaCyc:MONOMER-21141"/>
<dbReference type="UniPathway" id="UPA00078">
    <property type="reaction ID" value="UER00162"/>
</dbReference>
<dbReference type="Proteomes" id="UP000001425">
    <property type="component" value="Chromosome"/>
</dbReference>
<dbReference type="GO" id="GO:0051537">
    <property type="term" value="F:2 iron, 2 sulfur cluster binding"/>
    <property type="evidence" value="ECO:0007669"/>
    <property type="project" value="UniProtKB-KW"/>
</dbReference>
<dbReference type="GO" id="GO:0051539">
    <property type="term" value="F:4 iron, 4 sulfur cluster binding"/>
    <property type="evidence" value="ECO:0007669"/>
    <property type="project" value="UniProtKB-KW"/>
</dbReference>
<dbReference type="GO" id="GO:0004076">
    <property type="term" value="F:biotin synthase activity"/>
    <property type="evidence" value="ECO:0007669"/>
    <property type="project" value="UniProtKB-UniRule"/>
</dbReference>
<dbReference type="GO" id="GO:0005506">
    <property type="term" value="F:iron ion binding"/>
    <property type="evidence" value="ECO:0007669"/>
    <property type="project" value="UniProtKB-UniRule"/>
</dbReference>
<dbReference type="GO" id="GO:0016740">
    <property type="term" value="F:transferase activity"/>
    <property type="evidence" value="ECO:0000318"/>
    <property type="project" value="GO_Central"/>
</dbReference>
<dbReference type="GO" id="GO:0009102">
    <property type="term" value="P:biotin biosynthetic process"/>
    <property type="evidence" value="ECO:0007669"/>
    <property type="project" value="UniProtKB-UniRule"/>
</dbReference>
<dbReference type="CDD" id="cd01335">
    <property type="entry name" value="Radical_SAM"/>
    <property type="match status" value="1"/>
</dbReference>
<dbReference type="FunFam" id="3.20.20.70:FF:000026">
    <property type="entry name" value="Biotin synthase"/>
    <property type="match status" value="1"/>
</dbReference>
<dbReference type="Gene3D" id="3.20.20.70">
    <property type="entry name" value="Aldolase class I"/>
    <property type="match status" value="1"/>
</dbReference>
<dbReference type="HAMAP" id="MF_01694">
    <property type="entry name" value="BioB"/>
    <property type="match status" value="1"/>
</dbReference>
<dbReference type="InterPro" id="IPR013785">
    <property type="entry name" value="Aldolase_TIM"/>
</dbReference>
<dbReference type="InterPro" id="IPR010722">
    <property type="entry name" value="BATS_dom"/>
</dbReference>
<dbReference type="InterPro" id="IPR002684">
    <property type="entry name" value="Biotin_synth/BioAB"/>
</dbReference>
<dbReference type="InterPro" id="IPR024177">
    <property type="entry name" value="Biotin_synthase"/>
</dbReference>
<dbReference type="InterPro" id="IPR006638">
    <property type="entry name" value="Elp3/MiaA/NifB-like_rSAM"/>
</dbReference>
<dbReference type="InterPro" id="IPR007197">
    <property type="entry name" value="rSAM"/>
</dbReference>
<dbReference type="NCBIfam" id="TIGR00433">
    <property type="entry name" value="bioB"/>
    <property type="match status" value="1"/>
</dbReference>
<dbReference type="PANTHER" id="PTHR22976">
    <property type="entry name" value="BIOTIN SYNTHASE"/>
    <property type="match status" value="1"/>
</dbReference>
<dbReference type="PANTHER" id="PTHR22976:SF2">
    <property type="entry name" value="BIOTIN SYNTHASE, MITOCHONDRIAL"/>
    <property type="match status" value="1"/>
</dbReference>
<dbReference type="Pfam" id="PF06968">
    <property type="entry name" value="BATS"/>
    <property type="match status" value="1"/>
</dbReference>
<dbReference type="Pfam" id="PF04055">
    <property type="entry name" value="Radical_SAM"/>
    <property type="match status" value="1"/>
</dbReference>
<dbReference type="PIRSF" id="PIRSF001619">
    <property type="entry name" value="Biotin_synth"/>
    <property type="match status" value="1"/>
</dbReference>
<dbReference type="SFLD" id="SFLDG01060">
    <property type="entry name" value="BATS_domain_containing"/>
    <property type="match status" value="1"/>
</dbReference>
<dbReference type="SFLD" id="SFLDG01278">
    <property type="entry name" value="biotin_synthase_like"/>
    <property type="match status" value="1"/>
</dbReference>
<dbReference type="SMART" id="SM00876">
    <property type="entry name" value="BATS"/>
    <property type="match status" value="1"/>
</dbReference>
<dbReference type="SMART" id="SM00729">
    <property type="entry name" value="Elp3"/>
    <property type="match status" value="1"/>
</dbReference>
<dbReference type="SUPFAM" id="SSF102114">
    <property type="entry name" value="Radical SAM enzymes"/>
    <property type="match status" value="1"/>
</dbReference>
<dbReference type="PROSITE" id="PS51918">
    <property type="entry name" value="RADICAL_SAM"/>
    <property type="match status" value="1"/>
</dbReference>
<feature type="chain" id="PRO_0000185563" description="Biotin synthase">
    <location>
        <begin position="1"/>
        <end position="362"/>
    </location>
</feature>
<feature type="domain" description="Radical SAM core" evidence="2">
    <location>
        <begin position="70"/>
        <end position="305"/>
    </location>
</feature>
<feature type="binding site" evidence="1">
    <location>
        <position position="88"/>
    </location>
    <ligand>
        <name>[4Fe-4S] cluster</name>
        <dbReference type="ChEBI" id="CHEBI:49883"/>
        <note>4Fe-4S-S-AdoMet</note>
    </ligand>
</feature>
<feature type="binding site" evidence="1">
    <location>
        <position position="92"/>
    </location>
    <ligand>
        <name>[4Fe-4S] cluster</name>
        <dbReference type="ChEBI" id="CHEBI:49883"/>
        <note>4Fe-4S-S-AdoMet</note>
    </ligand>
</feature>
<feature type="binding site" evidence="1">
    <location>
        <position position="95"/>
    </location>
    <ligand>
        <name>[4Fe-4S] cluster</name>
        <dbReference type="ChEBI" id="CHEBI:49883"/>
        <note>4Fe-4S-S-AdoMet</note>
    </ligand>
</feature>
<feature type="binding site" evidence="1">
    <location>
        <position position="133"/>
    </location>
    <ligand>
        <name>[2Fe-2S] cluster</name>
        <dbReference type="ChEBI" id="CHEBI:190135"/>
    </ligand>
</feature>
<feature type="binding site" evidence="1">
    <location>
        <position position="170"/>
    </location>
    <ligand>
        <name>[2Fe-2S] cluster</name>
        <dbReference type="ChEBI" id="CHEBI:190135"/>
    </ligand>
</feature>
<feature type="binding site" evidence="1">
    <location>
        <position position="230"/>
    </location>
    <ligand>
        <name>[2Fe-2S] cluster</name>
        <dbReference type="ChEBI" id="CHEBI:190135"/>
    </ligand>
</feature>
<feature type="binding site" evidence="1">
    <location>
        <position position="300"/>
    </location>
    <ligand>
        <name>[2Fe-2S] cluster</name>
        <dbReference type="ChEBI" id="CHEBI:190135"/>
    </ligand>
</feature>
<comment type="function">
    <text evidence="1">Catalyzes the conversion of dethiobiotin (DTB) to biotin by the insertion of a sulfur atom into dethiobiotin via a radical-based mechanism.</text>
</comment>
<comment type="catalytic activity">
    <reaction evidence="1">
        <text>(4R,5S)-dethiobiotin + (sulfur carrier)-SH + 2 reduced [2Fe-2S]-[ferredoxin] + 2 S-adenosyl-L-methionine = (sulfur carrier)-H + biotin + 2 5'-deoxyadenosine + 2 L-methionine + 2 oxidized [2Fe-2S]-[ferredoxin]</text>
        <dbReference type="Rhea" id="RHEA:22060"/>
        <dbReference type="Rhea" id="RHEA-COMP:10000"/>
        <dbReference type="Rhea" id="RHEA-COMP:10001"/>
        <dbReference type="Rhea" id="RHEA-COMP:14737"/>
        <dbReference type="Rhea" id="RHEA-COMP:14739"/>
        <dbReference type="ChEBI" id="CHEBI:17319"/>
        <dbReference type="ChEBI" id="CHEBI:29917"/>
        <dbReference type="ChEBI" id="CHEBI:33737"/>
        <dbReference type="ChEBI" id="CHEBI:33738"/>
        <dbReference type="ChEBI" id="CHEBI:57586"/>
        <dbReference type="ChEBI" id="CHEBI:57844"/>
        <dbReference type="ChEBI" id="CHEBI:59789"/>
        <dbReference type="ChEBI" id="CHEBI:64428"/>
        <dbReference type="ChEBI" id="CHEBI:149473"/>
        <dbReference type="EC" id="2.8.1.6"/>
    </reaction>
</comment>
<comment type="cofactor">
    <cofactor evidence="1">
        <name>[4Fe-4S] cluster</name>
        <dbReference type="ChEBI" id="CHEBI:49883"/>
    </cofactor>
    <text evidence="1">Binds 1 [4Fe-4S] cluster. The cluster is coordinated with 3 cysteines and an exchangeable S-adenosyl-L-methionine.</text>
</comment>
<comment type="cofactor">
    <cofactor evidence="1">
        <name>[2Fe-2S] cluster</name>
        <dbReference type="ChEBI" id="CHEBI:190135"/>
    </cofactor>
    <text evidence="1">Binds 1 [2Fe-2S] cluster. The cluster is coordinated with 3 cysteines and 1 arginine.</text>
</comment>
<comment type="pathway">
    <text evidence="1">Cofactor biosynthesis; biotin biosynthesis; biotin from 7,8-diaminononanoate: step 2/2.</text>
</comment>
<comment type="subunit">
    <text evidence="1">Homodimer.</text>
</comment>
<comment type="similarity">
    <text evidence="1">Belongs to the radical SAM superfamily. Biotin synthase family.</text>
</comment>
<keyword id="KW-0001">2Fe-2S</keyword>
<keyword id="KW-0004">4Fe-4S</keyword>
<keyword id="KW-0093">Biotin biosynthesis</keyword>
<keyword id="KW-0408">Iron</keyword>
<keyword id="KW-0411">Iron-sulfur</keyword>
<keyword id="KW-0479">Metal-binding</keyword>
<keyword id="KW-1185">Reference proteome</keyword>
<keyword id="KW-0949">S-adenosyl-L-methionine</keyword>
<keyword id="KW-0808">Transferase</keyword>
<accession>P73538</accession>
<organism>
    <name type="scientific">Synechocystis sp. (strain ATCC 27184 / PCC 6803 / Kazusa)</name>
    <dbReference type="NCBI Taxonomy" id="1111708"/>
    <lineage>
        <taxon>Bacteria</taxon>
        <taxon>Bacillati</taxon>
        <taxon>Cyanobacteriota</taxon>
        <taxon>Cyanophyceae</taxon>
        <taxon>Synechococcales</taxon>
        <taxon>Merismopediaceae</taxon>
        <taxon>Synechocystis</taxon>
    </lineage>
</organism>